<proteinExistence type="inferred from homology"/>
<sequence length="151" mass="16675">MQIWVDADACPNVIKDVLFRVADRLQVQVTLVANKLLRTPPSRFIKAIQVPAGFDVADNEIVRLVQAGDLVITADIPLAADVLEKGGHPLNPRGEFYTKDNIQQHLTMRSFMDDLRSSGVDTGGPSAFSQGDIRAFANQLDRYLARQRSKG</sequence>
<accession>A6SUQ5</accession>
<reference key="1">
    <citation type="journal article" date="2007" name="PLoS Genet.">
        <title>Genome analysis of Minibacterium massiliensis highlights the convergent evolution of water-living bacteria.</title>
        <authorList>
            <person name="Audic S."/>
            <person name="Robert C."/>
            <person name="Campagna B."/>
            <person name="Parinello H."/>
            <person name="Claverie J.-M."/>
            <person name="Raoult D."/>
            <person name="Drancourt M."/>
        </authorList>
    </citation>
    <scope>NUCLEOTIDE SEQUENCE [LARGE SCALE GENOMIC DNA]</scope>
    <source>
        <strain>Marseille</strain>
    </source>
</reference>
<feature type="chain" id="PRO_1000014424" description="UPF0178 protein mma_0312">
    <location>
        <begin position="1"/>
        <end position="151"/>
    </location>
</feature>
<evidence type="ECO:0000255" key="1">
    <source>
        <dbReference type="HAMAP-Rule" id="MF_00489"/>
    </source>
</evidence>
<comment type="similarity">
    <text evidence="1">Belongs to the UPF0178 family.</text>
</comment>
<gene>
    <name type="ordered locus">mma_0312</name>
</gene>
<name>Y312_JANMA</name>
<organism>
    <name type="scientific">Janthinobacterium sp. (strain Marseille)</name>
    <name type="common">Minibacterium massiliensis</name>
    <dbReference type="NCBI Taxonomy" id="375286"/>
    <lineage>
        <taxon>Bacteria</taxon>
        <taxon>Pseudomonadati</taxon>
        <taxon>Pseudomonadota</taxon>
        <taxon>Betaproteobacteria</taxon>
        <taxon>Burkholderiales</taxon>
        <taxon>Oxalobacteraceae</taxon>
        <taxon>Janthinobacterium</taxon>
    </lineage>
</organism>
<protein>
    <recommendedName>
        <fullName evidence="1">UPF0178 protein mma_0312</fullName>
    </recommendedName>
</protein>
<dbReference type="EMBL" id="CP000269">
    <property type="protein sequence ID" value="ABR89957.1"/>
    <property type="molecule type" value="Genomic_DNA"/>
</dbReference>
<dbReference type="RefSeq" id="WP_012078177.1">
    <property type="nucleotide sequence ID" value="NC_009659.1"/>
</dbReference>
<dbReference type="STRING" id="375286.mma_0312"/>
<dbReference type="KEGG" id="mms:mma_0312"/>
<dbReference type="eggNOG" id="COG1671">
    <property type="taxonomic scope" value="Bacteria"/>
</dbReference>
<dbReference type="HOGENOM" id="CLU_106619_2_1_4"/>
<dbReference type="OrthoDB" id="9798918at2"/>
<dbReference type="Proteomes" id="UP000006388">
    <property type="component" value="Chromosome"/>
</dbReference>
<dbReference type="CDD" id="cd18720">
    <property type="entry name" value="PIN_YqxD-like"/>
    <property type="match status" value="1"/>
</dbReference>
<dbReference type="HAMAP" id="MF_00489">
    <property type="entry name" value="UPF0178"/>
    <property type="match status" value="1"/>
</dbReference>
<dbReference type="InterPro" id="IPR003791">
    <property type="entry name" value="UPF0178"/>
</dbReference>
<dbReference type="NCBIfam" id="NF001095">
    <property type="entry name" value="PRK00124.1"/>
    <property type="match status" value="1"/>
</dbReference>
<dbReference type="PANTHER" id="PTHR35146">
    <property type="entry name" value="UPF0178 PROTEIN YAII"/>
    <property type="match status" value="1"/>
</dbReference>
<dbReference type="PANTHER" id="PTHR35146:SF1">
    <property type="entry name" value="UPF0178 PROTEIN YAII"/>
    <property type="match status" value="1"/>
</dbReference>
<dbReference type="Pfam" id="PF02639">
    <property type="entry name" value="DUF188"/>
    <property type="match status" value="1"/>
</dbReference>